<name>RNFE_HAEI8</name>
<sequence length="235" mass="25831">MTDLTEKNTALEEEKIESAVENQQKSIWKEIFAQGIWKNNPAVVQLLGLCPLLAVSSTATNALGLGLATMLVLTCTNTVISLFRQYIPKEIRIPIYVMIIATTVTAVQLLMNAYTYTLYQSLGIFIPLIVTNCIIIGRAEAFASKNSLLHSIWDGFSMGLGMALSLTILGALREIIGQGTIFEGIENLFGEQAKFLTHHIYHTDSSFLLFILPPGAFIGLGLLLAIKNRIDNVKK</sequence>
<feature type="chain" id="PRO_1000014091" description="Ion-translocating oxidoreductase complex subunit E">
    <location>
        <begin position="1"/>
        <end position="235"/>
    </location>
</feature>
<feature type="transmembrane region" description="Helical" evidence="1">
    <location>
        <begin position="63"/>
        <end position="83"/>
    </location>
</feature>
<feature type="transmembrane region" description="Helical" evidence="1">
    <location>
        <begin position="93"/>
        <end position="113"/>
    </location>
</feature>
<feature type="transmembrane region" description="Helical" evidence="1">
    <location>
        <begin position="117"/>
        <end position="137"/>
    </location>
</feature>
<feature type="transmembrane region" description="Helical" evidence="1">
    <location>
        <begin position="152"/>
        <end position="172"/>
    </location>
</feature>
<feature type="transmembrane region" description="Helical" evidence="1">
    <location>
        <begin position="206"/>
        <end position="226"/>
    </location>
</feature>
<protein>
    <recommendedName>
        <fullName evidence="1">Ion-translocating oxidoreductase complex subunit E</fullName>
        <ecNumber evidence="1">7.-.-.-</ecNumber>
    </recommendedName>
    <alternativeName>
        <fullName evidence="1">Rnf electron transport complex subunit E</fullName>
    </alternativeName>
</protein>
<gene>
    <name evidence="1" type="primary">rnfE</name>
    <name type="ordered locus">NTHI1995</name>
</gene>
<proteinExistence type="inferred from homology"/>
<organism>
    <name type="scientific">Haemophilus influenzae (strain 86-028NP)</name>
    <dbReference type="NCBI Taxonomy" id="281310"/>
    <lineage>
        <taxon>Bacteria</taxon>
        <taxon>Pseudomonadati</taxon>
        <taxon>Pseudomonadota</taxon>
        <taxon>Gammaproteobacteria</taxon>
        <taxon>Pasteurellales</taxon>
        <taxon>Pasteurellaceae</taxon>
        <taxon>Haemophilus</taxon>
    </lineage>
</organism>
<comment type="function">
    <text evidence="1">Part of a membrane-bound complex that couples electron transfer with translocation of ions across the membrane.</text>
</comment>
<comment type="subunit">
    <text evidence="1">The complex is composed of six subunits: RnfA, RnfB, RnfC, RnfD, RnfE and RnfG.</text>
</comment>
<comment type="subcellular location">
    <subcellularLocation>
        <location evidence="1">Cell inner membrane</location>
        <topology evidence="1">Multi-pass membrane protein</topology>
    </subcellularLocation>
</comment>
<comment type="similarity">
    <text evidence="1">Belongs to the NqrDE/RnfAE family.</text>
</comment>
<reference key="1">
    <citation type="journal article" date="2005" name="J. Bacteriol.">
        <title>Genomic sequence of an otitis media isolate of nontypeable Haemophilus influenzae: comparative study with H. influenzae serotype d, strain KW20.</title>
        <authorList>
            <person name="Harrison A."/>
            <person name="Dyer D.W."/>
            <person name="Gillaspy A."/>
            <person name="Ray W.C."/>
            <person name="Mungur R."/>
            <person name="Carson M.B."/>
            <person name="Zhong H."/>
            <person name="Gipson J."/>
            <person name="Gipson M."/>
            <person name="Johnson L.S."/>
            <person name="Lewis L."/>
            <person name="Bakaletz L.O."/>
            <person name="Munson R.S. Jr."/>
        </authorList>
    </citation>
    <scope>NUCLEOTIDE SEQUENCE [LARGE SCALE GENOMIC DNA]</scope>
    <source>
        <strain>86-028NP</strain>
    </source>
</reference>
<keyword id="KW-0997">Cell inner membrane</keyword>
<keyword id="KW-1003">Cell membrane</keyword>
<keyword id="KW-0249">Electron transport</keyword>
<keyword id="KW-0472">Membrane</keyword>
<keyword id="KW-1278">Translocase</keyword>
<keyword id="KW-0812">Transmembrane</keyword>
<keyword id="KW-1133">Transmembrane helix</keyword>
<keyword id="KW-0813">Transport</keyword>
<dbReference type="EC" id="7.-.-.-" evidence="1"/>
<dbReference type="EMBL" id="CP000057">
    <property type="protein sequence ID" value="AAX88744.1"/>
    <property type="molecule type" value="Genomic_DNA"/>
</dbReference>
<dbReference type="RefSeq" id="WP_011272749.1">
    <property type="nucleotide sequence ID" value="NC_007146.2"/>
</dbReference>
<dbReference type="SMR" id="Q4QJQ3"/>
<dbReference type="KEGG" id="hit:NTHI1995"/>
<dbReference type="HOGENOM" id="CLU_046659_1_0_6"/>
<dbReference type="Proteomes" id="UP000002525">
    <property type="component" value="Chromosome"/>
</dbReference>
<dbReference type="GO" id="GO:0005886">
    <property type="term" value="C:plasma membrane"/>
    <property type="evidence" value="ECO:0007669"/>
    <property type="project" value="UniProtKB-SubCell"/>
</dbReference>
<dbReference type="GO" id="GO:0022900">
    <property type="term" value="P:electron transport chain"/>
    <property type="evidence" value="ECO:0007669"/>
    <property type="project" value="UniProtKB-UniRule"/>
</dbReference>
<dbReference type="HAMAP" id="MF_00478">
    <property type="entry name" value="RsxE_RnfE"/>
    <property type="match status" value="1"/>
</dbReference>
<dbReference type="InterPro" id="IPR003667">
    <property type="entry name" value="NqrDE/RnfAE"/>
</dbReference>
<dbReference type="InterPro" id="IPR010968">
    <property type="entry name" value="RnfE"/>
</dbReference>
<dbReference type="NCBIfam" id="NF009070">
    <property type="entry name" value="PRK12405.1"/>
    <property type="match status" value="1"/>
</dbReference>
<dbReference type="NCBIfam" id="TIGR01948">
    <property type="entry name" value="rnfE"/>
    <property type="match status" value="1"/>
</dbReference>
<dbReference type="PANTHER" id="PTHR30586">
    <property type="entry name" value="ELECTRON TRANSPORT COMPLEX PROTEIN RNFE"/>
    <property type="match status" value="1"/>
</dbReference>
<dbReference type="PANTHER" id="PTHR30586:SF0">
    <property type="entry name" value="ION-TRANSLOCATING OXIDOREDUCTASE COMPLEX SUBUNIT E"/>
    <property type="match status" value="1"/>
</dbReference>
<dbReference type="Pfam" id="PF02508">
    <property type="entry name" value="Rnf-Nqr"/>
    <property type="match status" value="1"/>
</dbReference>
<dbReference type="PIRSF" id="PIRSF006102">
    <property type="entry name" value="NQR_DE"/>
    <property type="match status" value="1"/>
</dbReference>
<accession>Q4QJQ3</accession>
<evidence type="ECO:0000255" key="1">
    <source>
        <dbReference type="HAMAP-Rule" id="MF_00478"/>
    </source>
</evidence>